<feature type="chain" id="PRO_0000406746" description="Pentafunctional AROM polypeptide">
    <location>
        <begin position="1"/>
        <end position="1574"/>
    </location>
</feature>
<feature type="region of interest" description="3-dehydroquinate synthase">
    <location>
        <begin position="1"/>
        <end position="384"/>
    </location>
</feature>
<feature type="region of interest" description="EPSP synthase">
    <location>
        <begin position="397"/>
        <end position="837"/>
    </location>
</feature>
<feature type="region of interest" description="Shikimate kinase">
    <location>
        <begin position="858"/>
        <end position="1052"/>
    </location>
</feature>
<feature type="region of interest" description="3-dehydroquinase">
    <location>
        <begin position="1053"/>
        <end position="1266"/>
    </location>
</feature>
<feature type="region of interest" description="Shikimate dehydrogenase">
    <location>
        <begin position="1279"/>
        <end position="1574"/>
    </location>
</feature>
<feature type="active site" description="Proton acceptor; for 3-dehydroquinate synthase activity" evidence="1">
    <location>
        <position position="260"/>
    </location>
</feature>
<feature type="active site" description="Proton acceptor; for 3-dehydroquinate synthase activity" evidence="1">
    <location>
        <position position="275"/>
    </location>
</feature>
<feature type="active site" description="For EPSP synthase activity" evidence="1">
    <location>
        <position position="819"/>
    </location>
</feature>
<feature type="active site" description="Proton acceptor; for 3-dehydroquinate dehydratase activity" evidence="1">
    <location>
        <position position="1169"/>
    </location>
</feature>
<feature type="active site" description="Schiff-base intermediate with substrate; for 3-dehydroquinate dehydratase activity" evidence="1">
    <location>
        <position position="1197"/>
    </location>
</feature>
<feature type="binding site" evidence="1">
    <location>
        <begin position="49"/>
        <end position="51"/>
    </location>
    <ligand>
        <name>NAD(+)</name>
        <dbReference type="ChEBI" id="CHEBI:57540"/>
    </ligand>
</feature>
<feature type="binding site" evidence="1">
    <location>
        <begin position="85"/>
        <end position="88"/>
    </location>
    <ligand>
        <name>NAD(+)</name>
        <dbReference type="ChEBI" id="CHEBI:57540"/>
    </ligand>
</feature>
<feature type="binding site" evidence="1">
    <location>
        <begin position="116"/>
        <end position="118"/>
    </location>
    <ligand>
        <name>NAD(+)</name>
        <dbReference type="ChEBI" id="CHEBI:57540"/>
    </ligand>
</feature>
<feature type="binding site" evidence="1">
    <location>
        <position position="121"/>
    </location>
    <ligand>
        <name>NAD(+)</name>
        <dbReference type="ChEBI" id="CHEBI:57540"/>
    </ligand>
</feature>
<feature type="binding site" evidence="1">
    <location>
        <position position="132"/>
    </location>
    <ligand>
        <name>7-phospho-2-dehydro-3-deoxy-D-arabino-heptonate</name>
        <dbReference type="ChEBI" id="CHEBI:58394"/>
    </ligand>
</feature>
<feature type="binding site" evidence="1">
    <location>
        <begin position="141"/>
        <end position="142"/>
    </location>
    <ligand>
        <name>NAD(+)</name>
        <dbReference type="ChEBI" id="CHEBI:57540"/>
    </ligand>
</feature>
<feature type="binding site" evidence="1">
    <location>
        <position position="148"/>
    </location>
    <ligand>
        <name>7-phospho-2-dehydro-3-deoxy-D-arabino-heptonate</name>
        <dbReference type="ChEBI" id="CHEBI:58394"/>
    </ligand>
</feature>
<feature type="binding site" evidence="1">
    <location>
        <position position="154"/>
    </location>
    <ligand>
        <name>7-phospho-2-dehydro-3-deoxy-D-arabino-heptonate</name>
        <dbReference type="ChEBI" id="CHEBI:58394"/>
    </ligand>
</feature>
<feature type="binding site" evidence="1">
    <location>
        <position position="163"/>
    </location>
    <ligand>
        <name>NAD(+)</name>
        <dbReference type="ChEBI" id="CHEBI:57540"/>
    </ligand>
</feature>
<feature type="binding site" evidence="1">
    <location>
        <position position="164"/>
    </location>
    <ligand>
        <name>7-phospho-2-dehydro-3-deoxy-D-arabino-heptonate</name>
        <dbReference type="ChEBI" id="CHEBI:58394"/>
    </ligand>
</feature>
<feature type="binding site" evidence="1">
    <location>
        <begin position="181"/>
        <end position="184"/>
    </location>
    <ligand>
        <name>NAD(+)</name>
        <dbReference type="ChEBI" id="CHEBI:57540"/>
    </ligand>
</feature>
<feature type="binding site" evidence="1">
    <location>
        <position position="192"/>
    </location>
    <ligand>
        <name>NAD(+)</name>
        <dbReference type="ChEBI" id="CHEBI:57540"/>
    </ligand>
</feature>
<feature type="binding site" evidence="1">
    <location>
        <begin position="196"/>
        <end position="199"/>
    </location>
    <ligand>
        <name>7-phospho-2-dehydro-3-deoxy-D-arabino-heptonate</name>
        <dbReference type="ChEBI" id="CHEBI:58394"/>
    </ligand>
</feature>
<feature type="binding site" evidence="1">
    <location>
        <position position="196"/>
    </location>
    <ligand>
        <name>Zn(2+)</name>
        <dbReference type="ChEBI" id="CHEBI:29105"/>
        <note>catalytic</note>
    </ligand>
</feature>
<feature type="binding site" evidence="1">
    <location>
        <position position="250"/>
    </location>
    <ligand>
        <name>7-phospho-2-dehydro-3-deoxy-D-arabino-heptonate</name>
        <dbReference type="ChEBI" id="CHEBI:58394"/>
    </ligand>
</feature>
<feature type="binding site" evidence="1">
    <location>
        <begin position="264"/>
        <end position="268"/>
    </location>
    <ligand>
        <name>7-phospho-2-dehydro-3-deoxy-D-arabino-heptonate</name>
        <dbReference type="ChEBI" id="CHEBI:58394"/>
    </ligand>
</feature>
<feature type="binding site" evidence="1">
    <location>
        <position position="271"/>
    </location>
    <ligand>
        <name>7-phospho-2-dehydro-3-deoxy-D-arabino-heptonate</name>
        <dbReference type="ChEBI" id="CHEBI:58394"/>
    </ligand>
</feature>
<feature type="binding site" evidence="1">
    <location>
        <position position="271"/>
    </location>
    <ligand>
        <name>Zn(2+)</name>
        <dbReference type="ChEBI" id="CHEBI:29105"/>
        <note>catalytic</note>
    </ligand>
</feature>
<feature type="binding site" evidence="1">
    <location>
        <position position="287"/>
    </location>
    <ligand>
        <name>7-phospho-2-dehydro-3-deoxy-D-arabino-heptonate</name>
        <dbReference type="ChEBI" id="CHEBI:58394"/>
    </ligand>
</feature>
<feature type="binding site" evidence="1">
    <location>
        <position position="287"/>
    </location>
    <ligand>
        <name>Zn(2+)</name>
        <dbReference type="ChEBI" id="CHEBI:29105"/>
        <note>catalytic</note>
    </ligand>
</feature>
<feature type="binding site" evidence="1">
    <location>
        <position position="356"/>
    </location>
    <ligand>
        <name>7-phospho-2-dehydro-3-deoxy-D-arabino-heptonate</name>
        <dbReference type="ChEBI" id="CHEBI:58394"/>
    </ligand>
</feature>
<feature type="binding site" evidence="1">
    <location>
        <begin position="865"/>
        <end position="872"/>
    </location>
    <ligand>
        <name>ATP</name>
        <dbReference type="ChEBI" id="CHEBI:30616"/>
    </ligand>
</feature>
<sequence>MSCSNNTEPTRIAILGTDNIVVDHGIWLNWVTKDLFDNVKSSTYVLVTDTNLYDTYVPPFKHAFDGATDTTAGPRLLTLAIPPGEISKSRQSKAHIEDWMLSQQCTRDTVIIALGGGVIGDMLGYVAATFMRGIRFVQVPTTLLAMVDSSIGGKTAIDTPMGKNLVGAFWQPSRIYIDLAFLETLPSREFINGMAEVIKTAAIWDENEFATLEANAPSIVAAVNQPTGPGRLSPIREILKRIVLGSARVKAEVVSSDEREGGLRNLLNFGHSIGHAYEALLTPQLLHGEAVAIGMVKEAELARYLGVLRPSAVARLAKCISSYGLPTSLGDKRVIKLTAGKRCPVDILLQKMAVDKKNDGRKKKIVLLSAIGKTHEPRATTVEDAAIKVMLSASTLITPGVSTKLATTVTPPGSKSISNRALILAALGEGTCRIKNLLHSDDVEFMLTAITRLGGASYAWEDAGEVLVLTGKGGQLRASSDPLYLGNAGTASRFLTTVVALCSPADVSSTVLTGNARMQVRPIGPLVDALRSNGVSIDYLGPGKSLPLRIDAAGGFAGGVIELAATVSSQYVSSILMAAPYAKEPVTLRLVGGKPISQPYIDMTLAMMKTFGVQVERSSSDPNTYHIAKGTYKNPAEYTIESDASSATYPLAIAAITGTTCTVPNIGSSSLQGDARFAIDVLQPMGCTVQQTASSTTVTGPAPGGLLGLPHVDMEPMTDAFLTASVLAAVAAGTTKISGIANQRVKECNRIAAMREQLGKFGIATDEFDDGIIVTGQPLDTLKTPDAGVFCYDDHRVAMSFSVLSTVANAPVTILERECTGKTWPGWWDTLSQSFGLRLNGDDKHPGVEGRHQQDHTTRSVFIVGMRGAGKTTTGRWMAKLLKRPFIDLDEELERRSGMTIPEMIHGTKGWEGFRRDELQLLHDVMENQASGHVFSCGGGIVESPEARKLLIAYKEKGGCVLLVHRDTKQVVDYLLQDKTRPAYREDIEDVYYRRKPLYDECSNFQYFSPHPAASVASRDAPLDFRCFVDAICGDGSKVTKMTAKEQSFFVSLTVPSVDSAVDVIPQVVVGSDAVELRVDLLQDQTPESVARQVSALRSAAGMPIIFTLRTVSQGGCFPDADHTQALSLYILALRMGVEFIDLEMTWPEHILQTVTNLKGRSRIIASHHDPRGELSWKNGSWTPFYNRALQWGSVIKLVGTAQSMEDNYDLARFKSDMLASHPTPVIALNMGALGKLSRVLNGFLTPVSHPALPFKAAPGQLSAAEIRRALFLLGNINAQSFHLFGKPISKSRSPALHNSLFNLTGLPHKYGLVETDQADEVAAVIREPDFGGASVTIPLKLDVMPLLDEVSESAKVIGAVNTIIPMPLDGSQKRRLLGDNTDWRGMVHCLESIGVASESTASTTTASALVIGSGGTTRAAIFALKSHGYHPIYMLARNEQSLETIRASFPTDFDLRALGGPAEVFTLAVAPTVVISTIPADKPMDPSLRETLEVVLKSPVSEQRTRVLLEMAYQPRHTAAMRLAEDAGWRTIPGAEVLAAQGWHQFQMWTGITPRFIDAQAAVNGDEIPTSTD</sequence>
<accession>C9SE96</accession>
<organism>
    <name type="scientific">Verticillium alfalfae (strain VaMs.102 / ATCC MYA-4576 / FGSC 10136)</name>
    <name type="common">Verticillium wilt of alfalfa</name>
    <name type="synonym">Verticillium albo-atrum</name>
    <dbReference type="NCBI Taxonomy" id="526221"/>
    <lineage>
        <taxon>Eukaryota</taxon>
        <taxon>Fungi</taxon>
        <taxon>Dikarya</taxon>
        <taxon>Ascomycota</taxon>
        <taxon>Pezizomycotina</taxon>
        <taxon>Sordariomycetes</taxon>
        <taxon>Hypocreomycetidae</taxon>
        <taxon>Glomerellales</taxon>
        <taxon>Plectosphaerellaceae</taxon>
        <taxon>Verticillium</taxon>
    </lineage>
</organism>
<keyword id="KW-0028">Amino-acid biosynthesis</keyword>
<keyword id="KW-0057">Aromatic amino acid biosynthesis</keyword>
<keyword id="KW-0067">ATP-binding</keyword>
<keyword id="KW-0963">Cytoplasm</keyword>
<keyword id="KW-0418">Kinase</keyword>
<keyword id="KW-0456">Lyase</keyword>
<keyword id="KW-0479">Metal-binding</keyword>
<keyword id="KW-0511">Multifunctional enzyme</keyword>
<keyword id="KW-0521">NADP</keyword>
<keyword id="KW-0547">Nucleotide-binding</keyword>
<keyword id="KW-0560">Oxidoreductase</keyword>
<keyword id="KW-1185">Reference proteome</keyword>
<keyword id="KW-0808">Transferase</keyword>
<keyword id="KW-0862">Zinc</keyword>
<reference key="1">
    <citation type="journal article" date="2011" name="PLoS Pathog.">
        <title>Comparative genomics yields insights into niche adaptation of plant vascular wilt pathogens.</title>
        <authorList>
            <person name="Klosterman S.J."/>
            <person name="Subbarao K.V."/>
            <person name="Kang S."/>
            <person name="Veronese P."/>
            <person name="Gold S.E."/>
            <person name="Thomma B.P.H.J."/>
            <person name="Chen Z."/>
            <person name="Henrissat B."/>
            <person name="Lee Y.-H."/>
            <person name="Park J."/>
            <person name="Garcia-Pedrajas M.D."/>
            <person name="Barbara D.J."/>
            <person name="Anchieta A."/>
            <person name="de Jonge R."/>
            <person name="Santhanam P."/>
            <person name="Maruthachalam K."/>
            <person name="Atallah Z."/>
            <person name="Amyotte S.G."/>
            <person name="Paz Z."/>
            <person name="Inderbitzin P."/>
            <person name="Hayes R.J."/>
            <person name="Heiman D.I."/>
            <person name="Young S."/>
            <person name="Zeng Q."/>
            <person name="Engels R."/>
            <person name="Galagan J."/>
            <person name="Cuomo C.A."/>
            <person name="Dobinson K.F."/>
            <person name="Ma L.-J."/>
        </authorList>
    </citation>
    <scope>NUCLEOTIDE SEQUENCE [LARGE SCALE GENOMIC DNA]</scope>
    <source>
        <strain>VaMs.102 / ATCC MYA-4576 / FGSC 10136</strain>
    </source>
</reference>
<comment type="function">
    <text evidence="1">The AROM polypeptide catalyzes 5 consecutive enzymatic reactions in prechorismate polyaromatic amino acid biosynthesis.</text>
</comment>
<comment type="catalytic activity">
    <reaction evidence="1">
        <text>7-phospho-2-dehydro-3-deoxy-D-arabino-heptonate = 3-dehydroquinate + phosphate</text>
        <dbReference type="Rhea" id="RHEA:21968"/>
        <dbReference type="ChEBI" id="CHEBI:32364"/>
        <dbReference type="ChEBI" id="CHEBI:43474"/>
        <dbReference type="ChEBI" id="CHEBI:58394"/>
        <dbReference type="EC" id="4.2.3.4"/>
    </reaction>
</comment>
<comment type="catalytic activity">
    <reaction evidence="1">
        <text>3-dehydroquinate = 3-dehydroshikimate + H2O</text>
        <dbReference type="Rhea" id="RHEA:21096"/>
        <dbReference type="ChEBI" id="CHEBI:15377"/>
        <dbReference type="ChEBI" id="CHEBI:16630"/>
        <dbReference type="ChEBI" id="CHEBI:32364"/>
        <dbReference type="EC" id="4.2.1.10"/>
    </reaction>
</comment>
<comment type="catalytic activity">
    <reaction evidence="1">
        <text>shikimate + NADP(+) = 3-dehydroshikimate + NADPH + H(+)</text>
        <dbReference type="Rhea" id="RHEA:17737"/>
        <dbReference type="ChEBI" id="CHEBI:15378"/>
        <dbReference type="ChEBI" id="CHEBI:16630"/>
        <dbReference type="ChEBI" id="CHEBI:36208"/>
        <dbReference type="ChEBI" id="CHEBI:57783"/>
        <dbReference type="ChEBI" id="CHEBI:58349"/>
        <dbReference type="EC" id="1.1.1.25"/>
    </reaction>
</comment>
<comment type="catalytic activity">
    <reaction evidence="1">
        <text>shikimate + ATP = 3-phosphoshikimate + ADP + H(+)</text>
        <dbReference type="Rhea" id="RHEA:13121"/>
        <dbReference type="ChEBI" id="CHEBI:15378"/>
        <dbReference type="ChEBI" id="CHEBI:30616"/>
        <dbReference type="ChEBI" id="CHEBI:36208"/>
        <dbReference type="ChEBI" id="CHEBI:145989"/>
        <dbReference type="ChEBI" id="CHEBI:456216"/>
        <dbReference type="EC" id="2.7.1.71"/>
    </reaction>
</comment>
<comment type="catalytic activity">
    <reaction evidence="1">
        <text>3-phosphoshikimate + phosphoenolpyruvate = 5-O-(1-carboxyvinyl)-3-phosphoshikimate + phosphate</text>
        <dbReference type="Rhea" id="RHEA:21256"/>
        <dbReference type="ChEBI" id="CHEBI:43474"/>
        <dbReference type="ChEBI" id="CHEBI:57701"/>
        <dbReference type="ChEBI" id="CHEBI:58702"/>
        <dbReference type="ChEBI" id="CHEBI:145989"/>
        <dbReference type="EC" id="2.5.1.19"/>
    </reaction>
</comment>
<comment type="cofactor">
    <cofactor>
        <name>Zn(2+)</name>
        <dbReference type="ChEBI" id="CHEBI:29105"/>
    </cofactor>
    <text>Binds 2 Zn(2+) ions per subunit.</text>
</comment>
<comment type="pathway">
    <text evidence="1">Metabolic intermediate biosynthesis; chorismate biosynthesis; chorismate from D-erythrose 4-phosphate and phosphoenolpyruvate: step 2/7.</text>
</comment>
<comment type="pathway">
    <text evidence="1">Metabolic intermediate biosynthesis; chorismate biosynthesis; chorismate from D-erythrose 4-phosphate and phosphoenolpyruvate: step 3/7.</text>
</comment>
<comment type="pathway">
    <text evidence="1">Metabolic intermediate biosynthesis; chorismate biosynthesis; chorismate from D-erythrose 4-phosphate and phosphoenolpyruvate: step 4/7.</text>
</comment>
<comment type="pathway">
    <text evidence="1">Metabolic intermediate biosynthesis; chorismate biosynthesis; chorismate from D-erythrose 4-phosphate and phosphoenolpyruvate: step 5/7.</text>
</comment>
<comment type="pathway">
    <text evidence="1">Metabolic intermediate biosynthesis; chorismate biosynthesis; chorismate from D-erythrose 4-phosphate and phosphoenolpyruvate: step 6/7.</text>
</comment>
<comment type="subunit">
    <text evidence="1">Homodimer.</text>
</comment>
<comment type="subcellular location">
    <subcellularLocation>
        <location evidence="1">Cytoplasm</location>
    </subcellularLocation>
</comment>
<comment type="similarity">
    <text evidence="1">In the N-terminal section; belongs to the sugar phosphate cyclases superfamily. Dehydroquinate synthase family.</text>
</comment>
<comment type="similarity">
    <text evidence="1">In the 2nd section; belongs to the EPSP synthase family.</text>
</comment>
<comment type="similarity">
    <text evidence="1">In the 3rd section; belongs to the shikimate kinase family.</text>
</comment>
<comment type="similarity">
    <text evidence="1">In the 4th section; belongs to the type-I 3-dehydroquinase family.</text>
</comment>
<comment type="similarity">
    <text evidence="1">In the C-terminal section; belongs to the shikimate dehydrogenase family.</text>
</comment>
<protein>
    <recommendedName>
        <fullName evidence="1">Pentafunctional AROM polypeptide</fullName>
    </recommendedName>
    <domain>
        <recommendedName>
            <fullName evidence="1">3-dehydroquinate synthase</fullName>
            <shortName evidence="1">DHQS</shortName>
            <ecNumber evidence="1">4.2.3.4</ecNumber>
        </recommendedName>
    </domain>
    <domain>
        <recommendedName>
            <fullName evidence="1">3-phosphoshikimate 1-carboxyvinyltransferase</fullName>
            <ecNumber evidence="1">2.5.1.19</ecNumber>
        </recommendedName>
        <alternativeName>
            <fullName evidence="1">5-enolpyruvylshikimate-3-phosphate synthase</fullName>
            <shortName evidence="1">EPSP synthase</shortName>
            <shortName evidence="1">EPSPS</shortName>
        </alternativeName>
    </domain>
    <domain>
        <recommendedName>
            <fullName evidence="1">Shikimate kinase</fullName>
            <shortName evidence="1">SK</shortName>
            <ecNumber evidence="1">2.7.1.71</ecNumber>
        </recommendedName>
    </domain>
    <domain>
        <recommendedName>
            <fullName evidence="1">3-dehydroquinate dehydratase</fullName>
            <shortName evidence="1">3-dehydroquinase</shortName>
            <ecNumber evidence="1">4.2.1.10</ecNumber>
        </recommendedName>
    </domain>
    <domain>
        <recommendedName>
            <fullName evidence="1">Shikimate dehydrogenase</fullName>
            <ecNumber evidence="1">1.1.1.25</ecNumber>
        </recommendedName>
    </domain>
</protein>
<evidence type="ECO:0000255" key="1">
    <source>
        <dbReference type="HAMAP-Rule" id="MF_03143"/>
    </source>
</evidence>
<dbReference type="EC" id="4.2.3.4" evidence="1"/>
<dbReference type="EC" id="2.5.1.19" evidence="1"/>
<dbReference type="EC" id="2.7.1.71" evidence="1"/>
<dbReference type="EC" id="4.2.1.10" evidence="1"/>
<dbReference type="EC" id="1.1.1.25" evidence="1"/>
<dbReference type="EMBL" id="DS985216">
    <property type="protein sequence ID" value="EEY17320.1"/>
    <property type="molecule type" value="Genomic_DNA"/>
</dbReference>
<dbReference type="RefSeq" id="XP_003007290.1">
    <property type="nucleotide sequence ID" value="XM_003007244.1"/>
</dbReference>
<dbReference type="SMR" id="C9SE96"/>
<dbReference type="STRING" id="526221.C9SE96"/>
<dbReference type="GeneID" id="9533373"/>
<dbReference type="KEGG" id="val:VDBG_03429"/>
<dbReference type="eggNOG" id="KOG0692">
    <property type="taxonomic scope" value="Eukaryota"/>
</dbReference>
<dbReference type="HOGENOM" id="CLU_001201_1_2_1"/>
<dbReference type="OMA" id="SWANMSW"/>
<dbReference type="OrthoDB" id="197068at2759"/>
<dbReference type="UniPathway" id="UPA00053">
    <property type="reaction ID" value="UER00085"/>
</dbReference>
<dbReference type="UniPathway" id="UPA00053">
    <property type="reaction ID" value="UER00086"/>
</dbReference>
<dbReference type="UniPathway" id="UPA00053">
    <property type="reaction ID" value="UER00087"/>
</dbReference>
<dbReference type="UniPathway" id="UPA00053">
    <property type="reaction ID" value="UER00088"/>
</dbReference>
<dbReference type="UniPathway" id="UPA00053">
    <property type="reaction ID" value="UER00089"/>
</dbReference>
<dbReference type="Proteomes" id="UP000008698">
    <property type="component" value="Unassembled WGS sequence"/>
</dbReference>
<dbReference type="GO" id="GO:0005737">
    <property type="term" value="C:cytoplasm"/>
    <property type="evidence" value="ECO:0007669"/>
    <property type="project" value="UniProtKB-SubCell"/>
</dbReference>
<dbReference type="GO" id="GO:0003855">
    <property type="term" value="F:3-dehydroquinate dehydratase activity"/>
    <property type="evidence" value="ECO:0007669"/>
    <property type="project" value="UniProtKB-UniRule"/>
</dbReference>
<dbReference type="GO" id="GO:0003856">
    <property type="term" value="F:3-dehydroquinate synthase activity"/>
    <property type="evidence" value="ECO:0007669"/>
    <property type="project" value="UniProtKB-UniRule"/>
</dbReference>
<dbReference type="GO" id="GO:0003866">
    <property type="term" value="F:3-phosphoshikimate 1-carboxyvinyltransferase activity"/>
    <property type="evidence" value="ECO:0007669"/>
    <property type="project" value="UniProtKB-UniRule"/>
</dbReference>
<dbReference type="GO" id="GO:0005524">
    <property type="term" value="F:ATP binding"/>
    <property type="evidence" value="ECO:0007669"/>
    <property type="project" value="UniProtKB-UniRule"/>
</dbReference>
<dbReference type="GO" id="GO:0046872">
    <property type="term" value="F:metal ion binding"/>
    <property type="evidence" value="ECO:0007669"/>
    <property type="project" value="UniProtKB-UniRule"/>
</dbReference>
<dbReference type="GO" id="GO:0004764">
    <property type="term" value="F:shikimate 3-dehydrogenase (NADP+) activity"/>
    <property type="evidence" value="ECO:0007669"/>
    <property type="project" value="UniProtKB-UniRule"/>
</dbReference>
<dbReference type="GO" id="GO:0004765">
    <property type="term" value="F:shikimate kinase activity"/>
    <property type="evidence" value="ECO:0007669"/>
    <property type="project" value="UniProtKB-UniRule"/>
</dbReference>
<dbReference type="GO" id="GO:0008652">
    <property type="term" value="P:amino acid biosynthetic process"/>
    <property type="evidence" value="ECO:0007669"/>
    <property type="project" value="UniProtKB-KW"/>
</dbReference>
<dbReference type="GO" id="GO:0009073">
    <property type="term" value="P:aromatic amino acid family biosynthetic process"/>
    <property type="evidence" value="ECO:0007669"/>
    <property type="project" value="UniProtKB-UniRule"/>
</dbReference>
<dbReference type="GO" id="GO:0009423">
    <property type="term" value="P:chorismate biosynthetic process"/>
    <property type="evidence" value="ECO:0007669"/>
    <property type="project" value="UniProtKB-UniRule"/>
</dbReference>
<dbReference type="CDD" id="cd00502">
    <property type="entry name" value="DHQase_I"/>
    <property type="match status" value="1"/>
</dbReference>
<dbReference type="CDD" id="cd08195">
    <property type="entry name" value="DHQS"/>
    <property type="match status" value="1"/>
</dbReference>
<dbReference type="CDD" id="cd01556">
    <property type="entry name" value="EPSP_synthase"/>
    <property type="match status" value="1"/>
</dbReference>
<dbReference type="CDD" id="cd01065">
    <property type="entry name" value="NAD_bind_Shikimate_DH"/>
    <property type="match status" value="1"/>
</dbReference>
<dbReference type="CDD" id="cd00464">
    <property type="entry name" value="SK"/>
    <property type="match status" value="1"/>
</dbReference>
<dbReference type="FunFam" id="1.20.1090.10:FF:000007">
    <property type="entry name" value="Pentafunctional AROM polypeptide"/>
    <property type="match status" value="1"/>
</dbReference>
<dbReference type="FunFam" id="3.20.20.70:FF:000135">
    <property type="entry name" value="Pentafunctional AROM polypeptide"/>
    <property type="match status" value="1"/>
</dbReference>
<dbReference type="FunFam" id="3.40.50.1970:FF:000007">
    <property type="entry name" value="Pentafunctional AROM polypeptide"/>
    <property type="match status" value="1"/>
</dbReference>
<dbReference type="FunFam" id="3.40.50.300:FF:001256">
    <property type="entry name" value="Pentafunctional AROM polypeptide"/>
    <property type="match status" value="1"/>
</dbReference>
<dbReference type="FunFam" id="3.65.10.10:FF:000007">
    <property type="entry name" value="Pentafunctional AROM polypeptide"/>
    <property type="match status" value="1"/>
</dbReference>
<dbReference type="FunFam" id="3.65.10.10:FF:000008">
    <property type="entry name" value="Pentafunctional AROM polypeptide"/>
    <property type="match status" value="1"/>
</dbReference>
<dbReference type="Gene3D" id="3.40.50.1970">
    <property type="match status" value="1"/>
</dbReference>
<dbReference type="Gene3D" id="3.20.20.70">
    <property type="entry name" value="Aldolase class I"/>
    <property type="match status" value="1"/>
</dbReference>
<dbReference type="Gene3D" id="1.20.1090.10">
    <property type="entry name" value="Dehydroquinate synthase-like - alpha domain"/>
    <property type="match status" value="1"/>
</dbReference>
<dbReference type="Gene3D" id="3.65.10.10">
    <property type="entry name" value="Enolpyruvate transferase domain"/>
    <property type="match status" value="2"/>
</dbReference>
<dbReference type="Gene3D" id="3.40.50.10860">
    <property type="entry name" value="Leucine Dehydrogenase, chain A, domain 1"/>
    <property type="match status" value="1"/>
</dbReference>
<dbReference type="Gene3D" id="3.40.50.720">
    <property type="entry name" value="NAD(P)-binding Rossmann-like Domain"/>
    <property type="match status" value="1"/>
</dbReference>
<dbReference type="Gene3D" id="3.40.50.300">
    <property type="entry name" value="P-loop containing nucleotide triphosphate hydrolases"/>
    <property type="match status" value="1"/>
</dbReference>
<dbReference type="HAMAP" id="MF_00210">
    <property type="entry name" value="EPSP_synth"/>
    <property type="match status" value="1"/>
</dbReference>
<dbReference type="HAMAP" id="MF_03143">
    <property type="entry name" value="Pentafunct_AroM"/>
    <property type="match status" value="1"/>
</dbReference>
<dbReference type="HAMAP" id="MF_00109">
    <property type="entry name" value="Shikimate_kinase"/>
    <property type="match status" value="1"/>
</dbReference>
<dbReference type="InterPro" id="IPR018508">
    <property type="entry name" value="3-dehydroquinate_DH_AS"/>
</dbReference>
<dbReference type="InterPro" id="IPR013785">
    <property type="entry name" value="Aldolase_TIM"/>
</dbReference>
<dbReference type="InterPro" id="IPR046346">
    <property type="entry name" value="Aminoacid_DH-like_N_sf"/>
</dbReference>
<dbReference type="InterPro" id="IPR016037">
    <property type="entry name" value="DHQ_synth_AroB"/>
</dbReference>
<dbReference type="InterPro" id="IPR030960">
    <property type="entry name" value="DHQS/DOIS_N"/>
</dbReference>
<dbReference type="InterPro" id="IPR056179">
    <property type="entry name" value="DHQS_C"/>
</dbReference>
<dbReference type="InterPro" id="IPR001381">
    <property type="entry name" value="DHquinase_I"/>
</dbReference>
<dbReference type="InterPro" id="IPR001986">
    <property type="entry name" value="Enolpyruvate_Tfrase_dom"/>
</dbReference>
<dbReference type="InterPro" id="IPR036968">
    <property type="entry name" value="Enolpyruvate_Tfrase_sf"/>
</dbReference>
<dbReference type="InterPro" id="IPR006264">
    <property type="entry name" value="EPSP_synthase"/>
</dbReference>
<dbReference type="InterPro" id="IPR023193">
    <property type="entry name" value="EPSP_synthase_CS"/>
</dbReference>
<dbReference type="InterPro" id="IPR036291">
    <property type="entry name" value="NAD(P)-bd_dom_sf"/>
</dbReference>
<dbReference type="InterPro" id="IPR027417">
    <property type="entry name" value="P-loop_NTPase"/>
</dbReference>
<dbReference type="InterPro" id="IPR008289">
    <property type="entry name" value="Pentafunct_AroM"/>
</dbReference>
<dbReference type="InterPro" id="IPR013792">
    <property type="entry name" value="RNA3'P_cycl/enolpyr_Trfase_a/b"/>
</dbReference>
<dbReference type="InterPro" id="IPR031322">
    <property type="entry name" value="Shikimate/glucono_kinase"/>
</dbReference>
<dbReference type="InterPro" id="IPR013708">
    <property type="entry name" value="Shikimate_DH-bd_N"/>
</dbReference>
<dbReference type="InterPro" id="IPR010110">
    <property type="entry name" value="Shikimate_DH_AroM-type"/>
</dbReference>
<dbReference type="InterPro" id="IPR000623">
    <property type="entry name" value="Shikimate_kinase/TSH1"/>
</dbReference>
<dbReference type="InterPro" id="IPR023000">
    <property type="entry name" value="Shikimate_kinase_CS"/>
</dbReference>
<dbReference type="NCBIfam" id="TIGR01356">
    <property type="entry name" value="aroA"/>
    <property type="match status" value="1"/>
</dbReference>
<dbReference type="NCBIfam" id="TIGR01357">
    <property type="entry name" value="aroB"/>
    <property type="match status" value="1"/>
</dbReference>
<dbReference type="NCBIfam" id="TIGR01093">
    <property type="entry name" value="aroD"/>
    <property type="match status" value="1"/>
</dbReference>
<dbReference type="NCBIfam" id="TIGR01809">
    <property type="entry name" value="Shik-DH-AROM"/>
    <property type="match status" value="1"/>
</dbReference>
<dbReference type="PANTHER" id="PTHR21090">
    <property type="entry name" value="AROM/DEHYDROQUINATE SYNTHASE"/>
    <property type="match status" value="1"/>
</dbReference>
<dbReference type="PANTHER" id="PTHR21090:SF5">
    <property type="entry name" value="PENTAFUNCTIONAL AROM POLYPEPTIDE"/>
    <property type="match status" value="1"/>
</dbReference>
<dbReference type="Pfam" id="PF01761">
    <property type="entry name" value="DHQ_synthase"/>
    <property type="match status" value="1"/>
</dbReference>
<dbReference type="Pfam" id="PF24621">
    <property type="entry name" value="DHQS_C"/>
    <property type="match status" value="1"/>
</dbReference>
<dbReference type="Pfam" id="PF01487">
    <property type="entry name" value="DHquinase_I"/>
    <property type="match status" value="1"/>
</dbReference>
<dbReference type="Pfam" id="PF00275">
    <property type="entry name" value="EPSP_synthase"/>
    <property type="match status" value="1"/>
</dbReference>
<dbReference type="Pfam" id="PF08501">
    <property type="entry name" value="Shikimate_dh_N"/>
    <property type="match status" value="1"/>
</dbReference>
<dbReference type="Pfam" id="PF01202">
    <property type="entry name" value="SKI"/>
    <property type="match status" value="1"/>
</dbReference>
<dbReference type="PIRSF" id="PIRSF000514">
    <property type="entry name" value="Pentafunct_AroM"/>
    <property type="match status" value="1"/>
</dbReference>
<dbReference type="PRINTS" id="PR01100">
    <property type="entry name" value="SHIKIMTKNASE"/>
</dbReference>
<dbReference type="SUPFAM" id="SSF51569">
    <property type="entry name" value="Aldolase"/>
    <property type="match status" value="1"/>
</dbReference>
<dbReference type="SUPFAM" id="SSF53223">
    <property type="entry name" value="Aminoacid dehydrogenase-like, N-terminal domain"/>
    <property type="match status" value="1"/>
</dbReference>
<dbReference type="SUPFAM" id="SSF56796">
    <property type="entry name" value="Dehydroquinate synthase-like"/>
    <property type="match status" value="1"/>
</dbReference>
<dbReference type="SUPFAM" id="SSF55205">
    <property type="entry name" value="EPT/RTPC-like"/>
    <property type="match status" value="1"/>
</dbReference>
<dbReference type="SUPFAM" id="SSF51735">
    <property type="entry name" value="NAD(P)-binding Rossmann-fold domains"/>
    <property type="match status" value="1"/>
</dbReference>
<dbReference type="SUPFAM" id="SSF52540">
    <property type="entry name" value="P-loop containing nucleoside triphosphate hydrolases"/>
    <property type="match status" value="1"/>
</dbReference>
<dbReference type="PROSITE" id="PS01028">
    <property type="entry name" value="DEHYDROQUINASE_I"/>
    <property type="match status" value="1"/>
</dbReference>
<dbReference type="PROSITE" id="PS00104">
    <property type="entry name" value="EPSP_SYNTHASE_1"/>
    <property type="match status" value="1"/>
</dbReference>
<dbReference type="PROSITE" id="PS00885">
    <property type="entry name" value="EPSP_SYNTHASE_2"/>
    <property type="match status" value="1"/>
</dbReference>
<dbReference type="PROSITE" id="PS01128">
    <property type="entry name" value="SHIKIMATE_KINASE"/>
    <property type="match status" value="1"/>
</dbReference>
<proteinExistence type="inferred from homology"/>
<name>ARO1_VERA1</name>
<gene>
    <name type="ORF">VDBG_03429</name>
</gene>